<protein>
    <recommendedName>
        <fullName>Transmembrane protein 35B</fullName>
    </recommendedName>
    <alternativeName>
        <fullName>ZMYM6 neighbor protein</fullName>
    </alternativeName>
</protein>
<dbReference type="EMBL" id="AC114490">
    <property type="status" value="NOT_ANNOTATED_CDS"/>
    <property type="molecule type" value="Genomic_DNA"/>
</dbReference>
<dbReference type="EMBL" id="CH471059">
    <property type="protein sequence ID" value="EAX07432.1"/>
    <property type="molecule type" value="Genomic_DNA"/>
</dbReference>
<dbReference type="EMBL" id="BC029439">
    <property type="protein sequence ID" value="AAH29439.1"/>
    <property type="molecule type" value="mRNA"/>
</dbReference>
<dbReference type="CCDS" id="CCDS53296.1"/>
<dbReference type="RefSeq" id="NP_001182085.1">
    <property type="nucleotide sequence ID" value="NM_001195156.2"/>
</dbReference>
<dbReference type="SMR" id="Q8NCS4"/>
<dbReference type="BioGRID" id="934819">
    <property type="interactions" value="21"/>
</dbReference>
<dbReference type="FunCoup" id="Q8NCS4">
    <property type="interactions" value="7"/>
</dbReference>
<dbReference type="IntAct" id="Q8NCS4">
    <property type="interactions" value="12"/>
</dbReference>
<dbReference type="STRING" id="9606.ENSP00000362435"/>
<dbReference type="iPTMnet" id="Q8NCS4"/>
<dbReference type="PhosphoSitePlus" id="Q8NCS4"/>
<dbReference type="BioMuta" id="TMEM35B"/>
<dbReference type="DMDM" id="74730174"/>
<dbReference type="jPOST" id="Q8NCS4"/>
<dbReference type="MassIVE" id="Q8NCS4"/>
<dbReference type="PaxDb" id="9606-ENSP00000362435"/>
<dbReference type="PeptideAtlas" id="Q8NCS4"/>
<dbReference type="ProteomicsDB" id="72935"/>
<dbReference type="Pumba" id="Q8NCS4"/>
<dbReference type="Antibodypedia" id="64058">
    <property type="antibodies" value="4 antibodies from 4 providers"/>
</dbReference>
<dbReference type="DNASU" id="100506144"/>
<dbReference type="Ensembl" id="ENST00000373337.4">
    <property type="protein sequence ID" value="ENSP00000362435.3"/>
    <property type="gene ID" value="ENSG00000243749.2"/>
</dbReference>
<dbReference type="GeneID" id="100506144"/>
<dbReference type="KEGG" id="hsa:100506144"/>
<dbReference type="MANE-Select" id="ENST00000373337.4">
    <property type="protein sequence ID" value="ENSP00000362435.3"/>
    <property type="RefSeq nucleotide sequence ID" value="NM_001195156.2"/>
    <property type="RefSeq protein sequence ID" value="NP_001182085.1"/>
</dbReference>
<dbReference type="UCSC" id="uc001bye.4">
    <property type="organism name" value="human"/>
</dbReference>
<dbReference type="AGR" id="HGNC:40021"/>
<dbReference type="CTD" id="100506144"/>
<dbReference type="GeneCards" id="TMEM35B"/>
<dbReference type="HGNC" id="HGNC:40021">
    <property type="gene designation" value="TMEM35B"/>
</dbReference>
<dbReference type="HPA" id="ENSG00000243749">
    <property type="expression patterns" value="Low tissue specificity"/>
</dbReference>
<dbReference type="neXtProt" id="NX_Q8NCS4"/>
<dbReference type="VEuPathDB" id="HostDB:ENSG00000243749"/>
<dbReference type="eggNOG" id="ENOG502RXPR">
    <property type="taxonomic scope" value="Eukaryota"/>
</dbReference>
<dbReference type="GeneTree" id="ENSGT00940000154325"/>
<dbReference type="HOGENOM" id="CLU_121618_1_0_1"/>
<dbReference type="InParanoid" id="Q8NCS4"/>
<dbReference type="OMA" id="PDPMNYQ"/>
<dbReference type="OrthoDB" id="432685at2759"/>
<dbReference type="PAN-GO" id="Q8NCS4">
    <property type="GO annotations" value="0 GO annotations based on evolutionary models"/>
</dbReference>
<dbReference type="PhylomeDB" id="Q8NCS4"/>
<dbReference type="TreeFam" id="TF300206"/>
<dbReference type="PathwayCommons" id="Q8NCS4"/>
<dbReference type="BioGRID-ORCS" id="100506144">
    <property type="hits" value="8 hits in 1141 CRISPR screens"/>
</dbReference>
<dbReference type="ChiTaRS" id="TMEM35B">
    <property type="organism name" value="human"/>
</dbReference>
<dbReference type="Pharos" id="Q8NCS4">
    <property type="development level" value="Tdark"/>
</dbReference>
<dbReference type="PRO" id="PR:Q8NCS4"/>
<dbReference type="Proteomes" id="UP000005640">
    <property type="component" value="Chromosome 1"/>
</dbReference>
<dbReference type="RNAct" id="Q8NCS4">
    <property type="molecule type" value="protein"/>
</dbReference>
<dbReference type="Bgee" id="ENSG00000243749">
    <property type="expression patterns" value="Expressed in placenta and 100 other cell types or tissues"/>
</dbReference>
<dbReference type="GO" id="GO:0016020">
    <property type="term" value="C:membrane"/>
    <property type="evidence" value="ECO:0007669"/>
    <property type="project" value="UniProtKB-SubCell"/>
</dbReference>
<dbReference type="InterPro" id="IPR032808">
    <property type="entry name" value="DoxX"/>
</dbReference>
<dbReference type="InterPro" id="IPR040399">
    <property type="entry name" value="TMEM35A/B"/>
</dbReference>
<dbReference type="PANTHER" id="PTHR13163">
    <property type="entry name" value="SPINAL CORD EXPRESSION PROTEIN 4"/>
    <property type="match status" value="1"/>
</dbReference>
<dbReference type="PANTHER" id="PTHR13163:SF2">
    <property type="entry name" value="TRANSMEMBRANE PROTEIN 35B"/>
    <property type="match status" value="1"/>
</dbReference>
<dbReference type="Pfam" id="PF13564">
    <property type="entry name" value="DoxX_2"/>
    <property type="match status" value="1"/>
</dbReference>
<sequence length="154" mass="16885">MALLLSVLRVLLGGFFALVGLAKLSEEISAPVSERMNALFVQFAEVFPLKVFGYQPDPLNYQIAVGFLELLAGLLLVMGPPMLQEISNLFLILLMMGAIFTLAALKESLSTCIPAIVCLGFLLLLNVGQLLAQTKKVVRPTRKKTLSTFKESWK</sequence>
<keyword id="KW-0472">Membrane</keyword>
<keyword id="KW-1267">Proteomics identification</keyword>
<keyword id="KW-1185">Reference proteome</keyword>
<keyword id="KW-0732">Signal</keyword>
<keyword id="KW-0812">Transmembrane</keyword>
<keyword id="KW-1133">Transmembrane helix</keyword>
<organism>
    <name type="scientific">Homo sapiens</name>
    <name type="common">Human</name>
    <dbReference type="NCBI Taxonomy" id="9606"/>
    <lineage>
        <taxon>Eukaryota</taxon>
        <taxon>Metazoa</taxon>
        <taxon>Chordata</taxon>
        <taxon>Craniata</taxon>
        <taxon>Vertebrata</taxon>
        <taxon>Euteleostomi</taxon>
        <taxon>Mammalia</taxon>
        <taxon>Eutheria</taxon>
        <taxon>Euarchontoglires</taxon>
        <taxon>Primates</taxon>
        <taxon>Haplorrhini</taxon>
        <taxon>Catarrhini</taxon>
        <taxon>Hominidae</taxon>
        <taxon>Homo</taxon>
    </lineage>
</organism>
<feature type="signal peptide" evidence="1">
    <location>
        <begin position="1"/>
        <end position="22"/>
    </location>
</feature>
<feature type="chain" id="PRO_0000411096" description="Transmembrane protein 35B">
    <location>
        <begin position="23"/>
        <end position="154"/>
    </location>
</feature>
<feature type="transmembrane region" description="Helical" evidence="1">
    <location>
        <begin position="63"/>
        <end position="83"/>
    </location>
</feature>
<feature type="transmembrane region" description="Helical" evidence="1">
    <location>
        <begin position="85"/>
        <end position="105"/>
    </location>
</feature>
<feature type="transmembrane region" description="Helical" evidence="1">
    <location>
        <begin position="112"/>
        <end position="132"/>
    </location>
</feature>
<gene>
    <name evidence="3" type="primary">TMEM35B</name>
    <name type="synonym">ZMYM6NB</name>
</gene>
<comment type="subcellular location">
    <subcellularLocation>
        <location evidence="2">Membrane</location>
        <topology evidence="2">Multi-pass membrane protein</topology>
    </subcellularLocation>
</comment>
<comment type="similarity">
    <text evidence="2">Belongs to the DoxX family.</text>
</comment>
<proteinExistence type="evidence at protein level"/>
<accession>Q8NCS4</accession>
<evidence type="ECO:0000255" key="1"/>
<evidence type="ECO:0000305" key="2"/>
<evidence type="ECO:0000312" key="3">
    <source>
        <dbReference type="HGNC" id="HGNC:40021"/>
    </source>
</evidence>
<reference key="1">
    <citation type="journal article" date="2006" name="Nature">
        <title>The DNA sequence and biological annotation of human chromosome 1.</title>
        <authorList>
            <person name="Gregory S.G."/>
            <person name="Barlow K.F."/>
            <person name="McLay K.E."/>
            <person name="Kaul R."/>
            <person name="Swarbreck D."/>
            <person name="Dunham A."/>
            <person name="Scott C.E."/>
            <person name="Howe K.L."/>
            <person name="Woodfine K."/>
            <person name="Spencer C.C.A."/>
            <person name="Jones M.C."/>
            <person name="Gillson C."/>
            <person name="Searle S."/>
            <person name="Zhou Y."/>
            <person name="Kokocinski F."/>
            <person name="McDonald L."/>
            <person name="Evans R."/>
            <person name="Phillips K."/>
            <person name="Atkinson A."/>
            <person name="Cooper R."/>
            <person name="Jones C."/>
            <person name="Hall R.E."/>
            <person name="Andrews T.D."/>
            <person name="Lloyd C."/>
            <person name="Ainscough R."/>
            <person name="Almeida J.P."/>
            <person name="Ambrose K.D."/>
            <person name="Anderson F."/>
            <person name="Andrew R.W."/>
            <person name="Ashwell R.I.S."/>
            <person name="Aubin K."/>
            <person name="Babbage A.K."/>
            <person name="Bagguley C.L."/>
            <person name="Bailey J."/>
            <person name="Beasley H."/>
            <person name="Bethel G."/>
            <person name="Bird C.P."/>
            <person name="Bray-Allen S."/>
            <person name="Brown J.Y."/>
            <person name="Brown A.J."/>
            <person name="Buckley D."/>
            <person name="Burton J."/>
            <person name="Bye J."/>
            <person name="Carder C."/>
            <person name="Chapman J.C."/>
            <person name="Clark S.Y."/>
            <person name="Clarke G."/>
            <person name="Clee C."/>
            <person name="Cobley V."/>
            <person name="Collier R.E."/>
            <person name="Corby N."/>
            <person name="Coville G.J."/>
            <person name="Davies J."/>
            <person name="Deadman R."/>
            <person name="Dunn M."/>
            <person name="Earthrowl M."/>
            <person name="Ellington A.G."/>
            <person name="Errington H."/>
            <person name="Frankish A."/>
            <person name="Frankland J."/>
            <person name="French L."/>
            <person name="Garner P."/>
            <person name="Garnett J."/>
            <person name="Gay L."/>
            <person name="Ghori M.R.J."/>
            <person name="Gibson R."/>
            <person name="Gilby L.M."/>
            <person name="Gillett W."/>
            <person name="Glithero R.J."/>
            <person name="Grafham D.V."/>
            <person name="Griffiths C."/>
            <person name="Griffiths-Jones S."/>
            <person name="Grocock R."/>
            <person name="Hammond S."/>
            <person name="Harrison E.S.I."/>
            <person name="Hart E."/>
            <person name="Haugen E."/>
            <person name="Heath P.D."/>
            <person name="Holmes S."/>
            <person name="Holt K."/>
            <person name="Howden P.J."/>
            <person name="Hunt A.R."/>
            <person name="Hunt S.E."/>
            <person name="Hunter G."/>
            <person name="Isherwood J."/>
            <person name="James R."/>
            <person name="Johnson C."/>
            <person name="Johnson D."/>
            <person name="Joy A."/>
            <person name="Kay M."/>
            <person name="Kershaw J.K."/>
            <person name="Kibukawa M."/>
            <person name="Kimberley A.M."/>
            <person name="King A."/>
            <person name="Knights A.J."/>
            <person name="Lad H."/>
            <person name="Laird G."/>
            <person name="Lawlor S."/>
            <person name="Leongamornlert D.A."/>
            <person name="Lloyd D.M."/>
            <person name="Loveland J."/>
            <person name="Lovell J."/>
            <person name="Lush M.J."/>
            <person name="Lyne R."/>
            <person name="Martin S."/>
            <person name="Mashreghi-Mohammadi M."/>
            <person name="Matthews L."/>
            <person name="Matthews N.S.W."/>
            <person name="McLaren S."/>
            <person name="Milne S."/>
            <person name="Mistry S."/>
            <person name="Moore M.J.F."/>
            <person name="Nickerson T."/>
            <person name="O'Dell C.N."/>
            <person name="Oliver K."/>
            <person name="Palmeiri A."/>
            <person name="Palmer S.A."/>
            <person name="Parker A."/>
            <person name="Patel D."/>
            <person name="Pearce A.V."/>
            <person name="Peck A.I."/>
            <person name="Pelan S."/>
            <person name="Phelps K."/>
            <person name="Phillimore B.J."/>
            <person name="Plumb R."/>
            <person name="Rajan J."/>
            <person name="Raymond C."/>
            <person name="Rouse G."/>
            <person name="Saenphimmachak C."/>
            <person name="Sehra H.K."/>
            <person name="Sheridan E."/>
            <person name="Shownkeen R."/>
            <person name="Sims S."/>
            <person name="Skuce C.D."/>
            <person name="Smith M."/>
            <person name="Steward C."/>
            <person name="Subramanian S."/>
            <person name="Sycamore N."/>
            <person name="Tracey A."/>
            <person name="Tromans A."/>
            <person name="Van Helmond Z."/>
            <person name="Wall M."/>
            <person name="Wallis J.M."/>
            <person name="White S."/>
            <person name="Whitehead S.L."/>
            <person name="Wilkinson J.E."/>
            <person name="Willey D.L."/>
            <person name="Williams H."/>
            <person name="Wilming L."/>
            <person name="Wray P.W."/>
            <person name="Wu Z."/>
            <person name="Coulson A."/>
            <person name="Vaudin M."/>
            <person name="Sulston J.E."/>
            <person name="Durbin R.M."/>
            <person name="Hubbard T."/>
            <person name="Wooster R."/>
            <person name="Dunham I."/>
            <person name="Carter N.P."/>
            <person name="McVean G."/>
            <person name="Ross M.T."/>
            <person name="Harrow J."/>
            <person name="Olson M.V."/>
            <person name="Beck S."/>
            <person name="Rogers J."/>
            <person name="Bentley D.R."/>
        </authorList>
    </citation>
    <scope>NUCLEOTIDE SEQUENCE [LARGE SCALE GENOMIC DNA]</scope>
</reference>
<reference key="2">
    <citation type="submission" date="2005-09" db="EMBL/GenBank/DDBJ databases">
        <authorList>
            <person name="Mural R.J."/>
            <person name="Istrail S."/>
            <person name="Sutton G.G."/>
            <person name="Florea L."/>
            <person name="Halpern A.L."/>
            <person name="Mobarry C.M."/>
            <person name="Lippert R."/>
            <person name="Walenz B."/>
            <person name="Shatkay H."/>
            <person name="Dew I."/>
            <person name="Miller J.R."/>
            <person name="Flanigan M.J."/>
            <person name="Edwards N.J."/>
            <person name="Bolanos R."/>
            <person name="Fasulo D."/>
            <person name="Halldorsson B.V."/>
            <person name="Hannenhalli S."/>
            <person name="Turner R."/>
            <person name="Yooseph S."/>
            <person name="Lu F."/>
            <person name="Nusskern D.R."/>
            <person name="Shue B.C."/>
            <person name="Zheng X.H."/>
            <person name="Zhong F."/>
            <person name="Delcher A.L."/>
            <person name="Huson D.H."/>
            <person name="Kravitz S.A."/>
            <person name="Mouchard L."/>
            <person name="Reinert K."/>
            <person name="Remington K.A."/>
            <person name="Clark A.G."/>
            <person name="Waterman M.S."/>
            <person name="Eichler E.E."/>
            <person name="Adams M.D."/>
            <person name="Hunkapiller M.W."/>
            <person name="Myers E.W."/>
            <person name="Venter J.C."/>
        </authorList>
    </citation>
    <scope>NUCLEOTIDE SEQUENCE [LARGE SCALE GENOMIC DNA]</scope>
</reference>
<reference key="3">
    <citation type="journal article" date="2004" name="Genome Res.">
        <title>The status, quality, and expansion of the NIH full-length cDNA project: the Mammalian Gene Collection (MGC).</title>
        <authorList>
            <consortium name="The MGC Project Team"/>
        </authorList>
    </citation>
    <scope>NUCLEOTIDE SEQUENCE [LARGE SCALE MRNA]</scope>
    <source>
        <tissue>Kidney</tissue>
    </source>
</reference>
<reference key="4">
    <citation type="journal article" date="2015" name="Proteomics">
        <title>N-terminome analysis of the human mitochondrial proteome.</title>
        <authorList>
            <person name="Vaca Jacome A.S."/>
            <person name="Rabilloud T."/>
            <person name="Schaeffer-Reiss C."/>
            <person name="Rompais M."/>
            <person name="Ayoub D."/>
            <person name="Lane L."/>
            <person name="Bairoch A."/>
            <person name="Van Dorsselaer A."/>
            <person name="Carapito C."/>
        </authorList>
    </citation>
    <scope>IDENTIFICATION BY MASS SPECTROMETRY [LARGE SCALE ANALYSIS]</scope>
</reference>
<name>TM35B_HUMAN</name>